<protein>
    <recommendedName>
        <fullName>Uncharacterized protein F44E2.3</fullName>
    </recommendedName>
</protein>
<organism>
    <name type="scientific">Caenorhabditis elegans</name>
    <dbReference type="NCBI Taxonomy" id="6239"/>
    <lineage>
        <taxon>Eukaryota</taxon>
        <taxon>Metazoa</taxon>
        <taxon>Ecdysozoa</taxon>
        <taxon>Nematoda</taxon>
        <taxon>Chromadorea</taxon>
        <taxon>Rhabditida</taxon>
        <taxon>Rhabditina</taxon>
        <taxon>Rhabditomorpha</taxon>
        <taxon>Rhabditoidea</taxon>
        <taxon>Rhabditidae</taxon>
        <taxon>Peloderinae</taxon>
        <taxon>Caenorhabditis</taxon>
    </lineage>
</organism>
<feature type="chain" id="PRO_0000065344" description="Uncharacterized protein F44E2.3">
    <location>
        <begin position="1"/>
        <end position="244"/>
    </location>
</feature>
<feature type="region of interest" description="Disordered" evidence="1">
    <location>
        <begin position="1"/>
        <end position="104"/>
    </location>
</feature>
<feature type="region of interest" description="Disordered" evidence="1">
    <location>
        <begin position="213"/>
        <end position="244"/>
    </location>
</feature>
<feature type="compositionally biased region" description="Basic residues" evidence="1">
    <location>
        <begin position="1"/>
        <end position="11"/>
    </location>
</feature>
<feature type="compositionally biased region" description="Basic and acidic residues" evidence="1">
    <location>
        <begin position="12"/>
        <end position="31"/>
    </location>
</feature>
<feature type="compositionally biased region" description="Basic residues" evidence="1">
    <location>
        <begin position="32"/>
        <end position="46"/>
    </location>
</feature>
<feature type="compositionally biased region" description="Basic and acidic residues" evidence="1">
    <location>
        <begin position="63"/>
        <end position="75"/>
    </location>
</feature>
<feature type="compositionally biased region" description="Pro residues" evidence="1">
    <location>
        <begin position="77"/>
        <end position="89"/>
    </location>
</feature>
<feature type="compositionally biased region" description="Basic and acidic residues" evidence="1">
    <location>
        <begin position="213"/>
        <end position="223"/>
    </location>
</feature>
<feature type="compositionally biased region" description="Polar residues" evidence="1">
    <location>
        <begin position="224"/>
        <end position="234"/>
    </location>
</feature>
<name>YL53_CAEEL</name>
<gene>
    <name type="ORF">F44E2.3</name>
</gene>
<evidence type="ECO:0000256" key="1">
    <source>
        <dbReference type="SAM" id="MobiDB-lite"/>
    </source>
</evidence>
<dbReference type="EMBL" id="FO081383">
    <property type="protein sequence ID" value="CCD71221.1"/>
    <property type="molecule type" value="Genomic_DNA"/>
</dbReference>
<dbReference type="PIR" id="S44822">
    <property type="entry name" value="S44822"/>
</dbReference>
<dbReference type="RefSeq" id="NP_498950.1">
    <property type="nucleotide sequence ID" value="NM_066549.4"/>
</dbReference>
<dbReference type="SMR" id="P34433"/>
<dbReference type="BioGRID" id="41444">
    <property type="interactions" value="1"/>
</dbReference>
<dbReference type="FunCoup" id="P34433">
    <property type="interactions" value="192"/>
</dbReference>
<dbReference type="STRING" id="6239.F44E2.3.1"/>
<dbReference type="PaxDb" id="6239-F44E2.3"/>
<dbReference type="PeptideAtlas" id="P34433"/>
<dbReference type="EnsemblMetazoa" id="F44E2.3.1">
    <property type="protein sequence ID" value="F44E2.3.1"/>
    <property type="gene ID" value="WBGene00018417"/>
</dbReference>
<dbReference type="GeneID" id="176242"/>
<dbReference type="KEGG" id="cel:CELE_F44E2.3"/>
<dbReference type="UCSC" id="F44E2.3">
    <property type="organism name" value="c. elegans"/>
</dbReference>
<dbReference type="AGR" id="WB:WBGene00018417"/>
<dbReference type="CTD" id="176242"/>
<dbReference type="WormBase" id="F44E2.3">
    <property type="protein sequence ID" value="CE00181"/>
    <property type="gene ID" value="WBGene00018417"/>
</dbReference>
<dbReference type="eggNOG" id="ENOG502SFHN">
    <property type="taxonomic scope" value="Eukaryota"/>
</dbReference>
<dbReference type="HOGENOM" id="CLU_1125379_0_0_1"/>
<dbReference type="InParanoid" id="P34433"/>
<dbReference type="OMA" id="RMEVERY"/>
<dbReference type="OrthoDB" id="5862042at2759"/>
<dbReference type="PhylomeDB" id="P34433"/>
<dbReference type="PRO" id="PR:P34433"/>
<dbReference type="Proteomes" id="UP000001940">
    <property type="component" value="Chromosome III"/>
</dbReference>
<dbReference type="Bgee" id="WBGene00018417">
    <property type="expression patterns" value="Expressed in pharyngeal muscle cell (C elegans) and 4 other cell types or tissues"/>
</dbReference>
<dbReference type="GO" id="GO:0005739">
    <property type="term" value="C:mitochondrion"/>
    <property type="evidence" value="ECO:0000318"/>
    <property type="project" value="GO_Central"/>
</dbReference>
<dbReference type="GO" id="GO:0005654">
    <property type="term" value="C:nucleoplasm"/>
    <property type="evidence" value="ECO:0000318"/>
    <property type="project" value="GO_Central"/>
</dbReference>
<dbReference type="InterPro" id="IPR033371">
    <property type="entry name" value="ARGLU1"/>
</dbReference>
<dbReference type="PANTHER" id="PTHR31711">
    <property type="entry name" value="ARGININE AND GLUTAMATE-RICH PROTEIN 1"/>
    <property type="match status" value="1"/>
</dbReference>
<dbReference type="PANTHER" id="PTHR31711:SF1">
    <property type="entry name" value="ARGININE AND GLUTAMATE-RICH PROTEIN 1"/>
    <property type="match status" value="1"/>
</dbReference>
<dbReference type="Pfam" id="PF15346">
    <property type="entry name" value="ARGLU"/>
    <property type="match status" value="1"/>
</dbReference>
<keyword id="KW-1185">Reference proteome</keyword>
<proteinExistence type="predicted"/>
<reference key="1">
    <citation type="journal article" date="1994" name="Nature">
        <title>2.2 Mb of contiguous nucleotide sequence from chromosome III of C. elegans.</title>
        <authorList>
            <person name="Wilson R."/>
            <person name="Ainscough R."/>
            <person name="Anderson K."/>
            <person name="Baynes C."/>
            <person name="Berks M."/>
            <person name="Bonfield J."/>
            <person name="Burton J."/>
            <person name="Connell M."/>
            <person name="Copsey T."/>
            <person name="Cooper J."/>
            <person name="Coulson A."/>
            <person name="Craxton M."/>
            <person name="Dear S."/>
            <person name="Du Z."/>
            <person name="Durbin R."/>
            <person name="Favello A."/>
            <person name="Fraser A."/>
            <person name="Fulton L."/>
            <person name="Gardner A."/>
            <person name="Green P."/>
            <person name="Hawkins T."/>
            <person name="Hillier L."/>
            <person name="Jier M."/>
            <person name="Johnston L."/>
            <person name="Jones M."/>
            <person name="Kershaw J."/>
            <person name="Kirsten J."/>
            <person name="Laisster N."/>
            <person name="Latreille P."/>
            <person name="Lightning J."/>
            <person name="Lloyd C."/>
            <person name="Mortimore B."/>
            <person name="O'Callaghan M."/>
            <person name="Parsons J."/>
            <person name="Percy C."/>
            <person name="Rifken L."/>
            <person name="Roopra A."/>
            <person name="Saunders D."/>
            <person name="Shownkeen R."/>
            <person name="Sims M."/>
            <person name="Smaldon N."/>
            <person name="Smith A."/>
            <person name="Smith M."/>
            <person name="Sonnhammer E."/>
            <person name="Staden R."/>
            <person name="Sulston J."/>
            <person name="Thierry-Mieg J."/>
            <person name="Thomas K."/>
            <person name="Vaudin M."/>
            <person name="Vaughan K."/>
            <person name="Waterston R."/>
            <person name="Watson A."/>
            <person name="Weinstock L."/>
            <person name="Wilkinson-Sproat J."/>
            <person name="Wohldman P."/>
        </authorList>
    </citation>
    <scope>NUCLEOTIDE SEQUENCE [LARGE SCALE GENOMIC DNA]</scope>
    <source>
        <strain>Bristol N2</strain>
    </source>
</reference>
<reference key="2">
    <citation type="journal article" date="1998" name="Science">
        <title>Genome sequence of the nematode C. elegans: a platform for investigating biology.</title>
        <authorList>
            <consortium name="The C. elegans sequencing consortium"/>
        </authorList>
    </citation>
    <scope>NUCLEOTIDE SEQUENCE [LARGE SCALE GENOMIC DNA]</scope>
    <source>
        <strain>Bristol N2</strain>
    </source>
</reference>
<accession>P34433</accession>
<sequence length="244" mass="28995">MSRRSRSRSRSPKRDREERKRREDRDRDRERKRDRKDRERKRRHRSSSSEGSQAEPHQLGSIFREERRRRERNESPKLPPPPPPPPSDPPVDTSIPFDVSTLNEPTKKWLEEKIVEQVSARVHQLEAMMAEKATSARNEMEKMLRAQIEAEMAVELAECKKRDEESRKKCKQLEAELERKVLEAEESRKKFEEDRLAMLEQKSQLERDRAELARQKSDMKKNEQQAILNKSGNSRAPIKFKFGK</sequence>